<reference key="1">
    <citation type="journal article" date="2010" name="Genome Biol. Evol.">
        <title>Continuing evolution of Burkholderia mallei through genome reduction and large-scale rearrangements.</title>
        <authorList>
            <person name="Losada L."/>
            <person name="Ronning C.M."/>
            <person name="DeShazer D."/>
            <person name="Woods D."/>
            <person name="Fedorova N."/>
            <person name="Kim H.S."/>
            <person name="Shabalina S.A."/>
            <person name="Pearson T.R."/>
            <person name="Brinkac L."/>
            <person name="Tan P."/>
            <person name="Nandi T."/>
            <person name="Crabtree J."/>
            <person name="Badger J."/>
            <person name="Beckstrom-Sternberg S."/>
            <person name="Saqib M."/>
            <person name="Schutzer S.E."/>
            <person name="Keim P."/>
            <person name="Nierman W.C."/>
        </authorList>
    </citation>
    <scope>NUCLEOTIDE SEQUENCE [LARGE SCALE GENOMIC DNA]</scope>
    <source>
        <strain>NCTC 10247</strain>
    </source>
</reference>
<evidence type="ECO:0000255" key="1">
    <source>
        <dbReference type="HAMAP-Rule" id="MF_00235"/>
    </source>
</evidence>
<sequence>MRLILLGAPGAGKGTQANFIKEKFGIPQISTGDMLRAAVKAGTPLGVEAKTYMDEGKLVPDSLIIGLVKERLKEADCANGYLFDGFPRTIAQADAMKEAGVAIDYVLEIDVPFSEIIERMSGRRTHPASGRTYHVKFNPPKVEGKDDVTGEPLVQRDDDKEETVKKRLDVYEAQTKPLITYYGDWARRGAENGLKAPAYRKISGLGAVEEIRARVFDALK</sequence>
<keyword id="KW-0067">ATP-binding</keyword>
<keyword id="KW-0963">Cytoplasm</keyword>
<keyword id="KW-0418">Kinase</keyword>
<keyword id="KW-0545">Nucleotide biosynthesis</keyword>
<keyword id="KW-0547">Nucleotide-binding</keyword>
<keyword id="KW-0808">Transferase</keyword>
<organism>
    <name type="scientific">Burkholderia mallei (strain NCTC 10247)</name>
    <dbReference type="NCBI Taxonomy" id="320389"/>
    <lineage>
        <taxon>Bacteria</taxon>
        <taxon>Pseudomonadati</taxon>
        <taxon>Pseudomonadota</taxon>
        <taxon>Betaproteobacteria</taxon>
        <taxon>Burkholderiales</taxon>
        <taxon>Burkholderiaceae</taxon>
        <taxon>Burkholderia</taxon>
        <taxon>pseudomallei group</taxon>
    </lineage>
</organism>
<protein>
    <recommendedName>
        <fullName evidence="1">Adenylate kinase</fullName>
        <shortName evidence="1">AK</shortName>
        <ecNumber evidence="1">2.7.4.3</ecNumber>
    </recommendedName>
    <alternativeName>
        <fullName evidence="1">ATP-AMP transphosphorylase</fullName>
    </alternativeName>
    <alternativeName>
        <fullName evidence="1">ATP:AMP phosphotransferase</fullName>
    </alternativeName>
    <alternativeName>
        <fullName evidence="1">Adenylate monophosphate kinase</fullName>
    </alternativeName>
</protein>
<proteinExistence type="inferred from homology"/>
<name>KAD_BURM7</name>
<accession>A3MN48</accession>
<comment type="function">
    <text evidence="1">Catalyzes the reversible transfer of the terminal phosphate group between ATP and AMP. Plays an important role in cellular energy homeostasis and in adenine nucleotide metabolism.</text>
</comment>
<comment type="catalytic activity">
    <reaction evidence="1">
        <text>AMP + ATP = 2 ADP</text>
        <dbReference type="Rhea" id="RHEA:12973"/>
        <dbReference type="ChEBI" id="CHEBI:30616"/>
        <dbReference type="ChEBI" id="CHEBI:456215"/>
        <dbReference type="ChEBI" id="CHEBI:456216"/>
        <dbReference type="EC" id="2.7.4.3"/>
    </reaction>
</comment>
<comment type="pathway">
    <text evidence="1">Purine metabolism; AMP biosynthesis via salvage pathway; AMP from ADP: step 1/1.</text>
</comment>
<comment type="subunit">
    <text evidence="1">Monomer.</text>
</comment>
<comment type="subcellular location">
    <subcellularLocation>
        <location evidence="1">Cytoplasm</location>
    </subcellularLocation>
</comment>
<comment type="domain">
    <text evidence="1">Consists of three domains, a large central CORE domain and two small peripheral domains, NMPbind and LID, which undergo movements during catalysis. The LID domain closes over the site of phosphoryl transfer upon ATP binding. Assembling and dissambling the active center during each catalytic cycle provides an effective means to prevent ATP hydrolysis.</text>
</comment>
<comment type="similarity">
    <text evidence="1">Belongs to the adenylate kinase family.</text>
</comment>
<dbReference type="EC" id="2.7.4.3" evidence="1"/>
<dbReference type="EMBL" id="CP000548">
    <property type="protein sequence ID" value="ABO07195.1"/>
    <property type="molecule type" value="Genomic_DNA"/>
</dbReference>
<dbReference type="RefSeq" id="WP_004185840.1">
    <property type="nucleotide sequence ID" value="NZ_CP007802.1"/>
</dbReference>
<dbReference type="SMR" id="A3MN48"/>
<dbReference type="GeneID" id="93059382"/>
<dbReference type="KEGG" id="bmaz:BM44_1086"/>
<dbReference type="KEGG" id="bmn:BMA10247_2154"/>
<dbReference type="PATRIC" id="fig|320389.8.peg.1211"/>
<dbReference type="UniPathway" id="UPA00588">
    <property type="reaction ID" value="UER00649"/>
</dbReference>
<dbReference type="GO" id="GO:0005737">
    <property type="term" value="C:cytoplasm"/>
    <property type="evidence" value="ECO:0007669"/>
    <property type="project" value="UniProtKB-SubCell"/>
</dbReference>
<dbReference type="GO" id="GO:0004017">
    <property type="term" value="F:adenylate kinase activity"/>
    <property type="evidence" value="ECO:0007669"/>
    <property type="project" value="UniProtKB-UniRule"/>
</dbReference>
<dbReference type="GO" id="GO:0005524">
    <property type="term" value="F:ATP binding"/>
    <property type="evidence" value="ECO:0007669"/>
    <property type="project" value="UniProtKB-UniRule"/>
</dbReference>
<dbReference type="GO" id="GO:0044209">
    <property type="term" value="P:AMP salvage"/>
    <property type="evidence" value="ECO:0007669"/>
    <property type="project" value="UniProtKB-UniRule"/>
</dbReference>
<dbReference type="CDD" id="cd01428">
    <property type="entry name" value="ADK"/>
    <property type="match status" value="1"/>
</dbReference>
<dbReference type="FunFam" id="3.40.50.300:FF:000106">
    <property type="entry name" value="Adenylate kinase mitochondrial"/>
    <property type="match status" value="1"/>
</dbReference>
<dbReference type="Gene3D" id="3.40.50.300">
    <property type="entry name" value="P-loop containing nucleotide triphosphate hydrolases"/>
    <property type="match status" value="1"/>
</dbReference>
<dbReference type="HAMAP" id="MF_00235">
    <property type="entry name" value="Adenylate_kinase_Adk"/>
    <property type="match status" value="1"/>
</dbReference>
<dbReference type="InterPro" id="IPR006259">
    <property type="entry name" value="Adenyl_kin_sub"/>
</dbReference>
<dbReference type="InterPro" id="IPR000850">
    <property type="entry name" value="Adenylat/UMP-CMP_kin"/>
</dbReference>
<dbReference type="InterPro" id="IPR033690">
    <property type="entry name" value="Adenylat_kinase_CS"/>
</dbReference>
<dbReference type="InterPro" id="IPR007862">
    <property type="entry name" value="Adenylate_kinase_lid-dom"/>
</dbReference>
<dbReference type="InterPro" id="IPR027417">
    <property type="entry name" value="P-loop_NTPase"/>
</dbReference>
<dbReference type="NCBIfam" id="TIGR01351">
    <property type="entry name" value="adk"/>
    <property type="match status" value="1"/>
</dbReference>
<dbReference type="NCBIfam" id="NF001379">
    <property type="entry name" value="PRK00279.1-1"/>
    <property type="match status" value="1"/>
</dbReference>
<dbReference type="NCBIfam" id="NF001380">
    <property type="entry name" value="PRK00279.1-2"/>
    <property type="match status" value="1"/>
</dbReference>
<dbReference type="NCBIfam" id="NF001381">
    <property type="entry name" value="PRK00279.1-3"/>
    <property type="match status" value="1"/>
</dbReference>
<dbReference type="NCBIfam" id="NF011100">
    <property type="entry name" value="PRK14527.1"/>
    <property type="match status" value="1"/>
</dbReference>
<dbReference type="PANTHER" id="PTHR23359">
    <property type="entry name" value="NUCLEOTIDE KINASE"/>
    <property type="match status" value="1"/>
</dbReference>
<dbReference type="Pfam" id="PF00406">
    <property type="entry name" value="ADK"/>
    <property type="match status" value="1"/>
</dbReference>
<dbReference type="Pfam" id="PF05191">
    <property type="entry name" value="ADK_lid"/>
    <property type="match status" value="1"/>
</dbReference>
<dbReference type="PRINTS" id="PR00094">
    <property type="entry name" value="ADENYLTKNASE"/>
</dbReference>
<dbReference type="SUPFAM" id="SSF52540">
    <property type="entry name" value="P-loop containing nucleoside triphosphate hydrolases"/>
    <property type="match status" value="1"/>
</dbReference>
<dbReference type="PROSITE" id="PS00113">
    <property type="entry name" value="ADENYLATE_KINASE"/>
    <property type="match status" value="1"/>
</dbReference>
<feature type="chain" id="PRO_1000058798" description="Adenylate kinase">
    <location>
        <begin position="1"/>
        <end position="220"/>
    </location>
</feature>
<feature type="region of interest" description="NMP" evidence="1">
    <location>
        <begin position="30"/>
        <end position="59"/>
    </location>
</feature>
<feature type="region of interest" description="LID" evidence="1">
    <location>
        <begin position="122"/>
        <end position="159"/>
    </location>
</feature>
<feature type="binding site" evidence="1">
    <location>
        <begin position="10"/>
        <end position="15"/>
    </location>
    <ligand>
        <name>ATP</name>
        <dbReference type="ChEBI" id="CHEBI:30616"/>
    </ligand>
</feature>
<feature type="binding site" evidence="1">
    <location>
        <position position="31"/>
    </location>
    <ligand>
        <name>AMP</name>
        <dbReference type="ChEBI" id="CHEBI:456215"/>
    </ligand>
</feature>
<feature type="binding site" evidence="1">
    <location>
        <position position="36"/>
    </location>
    <ligand>
        <name>AMP</name>
        <dbReference type="ChEBI" id="CHEBI:456215"/>
    </ligand>
</feature>
<feature type="binding site" evidence="1">
    <location>
        <begin position="57"/>
        <end position="59"/>
    </location>
    <ligand>
        <name>AMP</name>
        <dbReference type="ChEBI" id="CHEBI:456215"/>
    </ligand>
</feature>
<feature type="binding site" evidence="1">
    <location>
        <begin position="85"/>
        <end position="88"/>
    </location>
    <ligand>
        <name>AMP</name>
        <dbReference type="ChEBI" id="CHEBI:456215"/>
    </ligand>
</feature>
<feature type="binding site" evidence="1">
    <location>
        <position position="92"/>
    </location>
    <ligand>
        <name>AMP</name>
        <dbReference type="ChEBI" id="CHEBI:456215"/>
    </ligand>
</feature>
<feature type="binding site" evidence="1">
    <location>
        <position position="123"/>
    </location>
    <ligand>
        <name>ATP</name>
        <dbReference type="ChEBI" id="CHEBI:30616"/>
    </ligand>
</feature>
<feature type="binding site" evidence="1">
    <location>
        <begin position="132"/>
        <end position="133"/>
    </location>
    <ligand>
        <name>ATP</name>
        <dbReference type="ChEBI" id="CHEBI:30616"/>
    </ligand>
</feature>
<feature type="binding site" evidence="1">
    <location>
        <position position="156"/>
    </location>
    <ligand>
        <name>AMP</name>
        <dbReference type="ChEBI" id="CHEBI:456215"/>
    </ligand>
</feature>
<feature type="binding site" evidence="1">
    <location>
        <position position="167"/>
    </location>
    <ligand>
        <name>AMP</name>
        <dbReference type="ChEBI" id="CHEBI:456215"/>
    </ligand>
</feature>
<feature type="binding site" evidence="1">
    <location>
        <position position="206"/>
    </location>
    <ligand>
        <name>ATP</name>
        <dbReference type="ChEBI" id="CHEBI:30616"/>
    </ligand>
</feature>
<gene>
    <name evidence="1" type="primary">adk</name>
    <name type="ordered locus">BMA10247_2154</name>
</gene>